<gene>
    <name type="primary">CRRSP10</name>
    <name type="ordered locus">At2g31620</name>
    <name type="ORF">T9H9.14</name>
</gene>
<keyword id="KW-1185">Reference proteome</keyword>
<keyword id="KW-0677">Repeat</keyword>
<keyword id="KW-0964">Secreted</keyword>
<keyword id="KW-0732">Signal</keyword>
<evidence type="ECO:0000255" key="1"/>
<evidence type="ECO:0000255" key="2">
    <source>
        <dbReference type="PROSITE-ProRule" id="PRU00806"/>
    </source>
</evidence>
<evidence type="ECO:0000305" key="3"/>
<organism>
    <name type="scientific">Arabidopsis thaliana</name>
    <name type="common">Mouse-ear cress</name>
    <dbReference type="NCBI Taxonomy" id="3702"/>
    <lineage>
        <taxon>Eukaryota</taxon>
        <taxon>Viridiplantae</taxon>
        <taxon>Streptophyta</taxon>
        <taxon>Embryophyta</taxon>
        <taxon>Tracheophyta</taxon>
        <taxon>Spermatophyta</taxon>
        <taxon>Magnoliopsida</taxon>
        <taxon>eudicotyledons</taxon>
        <taxon>Gunneridae</taxon>
        <taxon>Pentapetalae</taxon>
        <taxon>rosids</taxon>
        <taxon>malvids</taxon>
        <taxon>Brassicales</taxon>
        <taxon>Brassicaceae</taxon>
        <taxon>Camelineae</taxon>
        <taxon>Arabidopsis</taxon>
    </lineage>
</organism>
<comment type="subcellular location">
    <subcellularLocation>
        <location evidence="3">Secreted</location>
    </subcellularLocation>
</comment>
<comment type="similarity">
    <text evidence="3">Belongs to the cysteine-rich repeat secretory protein family.</text>
</comment>
<proteinExistence type="inferred from homology"/>
<feature type="signal peptide" evidence="1">
    <location>
        <begin position="1"/>
        <end position="26"/>
    </location>
</feature>
<feature type="chain" id="PRO_0000296138" description="Putative cysteine-rich repeat secretory protein 10">
    <location>
        <begin position="27"/>
        <end position="255"/>
    </location>
</feature>
<feature type="domain" description="Gnk2-homologous 1" evidence="2">
    <location>
        <begin position="33"/>
        <end position="134"/>
    </location>
</feature>
<feature type="domain" description="Gnk2-homologous 2" evidence="2">
    <location>
        <begin position="140"/>
        <end position="252"/>
    </location>
</feature>
<sequence>MFSSSVSISILVVVAMQFSFIHNVLSLNQTNSYLQHICINSEGKYKAKNSYESRLKDHLDSMSNILDYGFIHGVGGADSSTYYIKAQCRGDASESKCRSCLFTAFSGILRRCPNNRGRIIWYDNCFLYISEIYTYEKIDFKHYLYLHNAKDVSGNKKLFNKNTKALLDKLKEKAIRKEQEPYTRDYMYAAGEESLGTTKLYGMMQCTQDLSVKNCSVCLDSIIAKLPRCCNGKQGGRVLNPSCTFRYELYPFVKP</sequence>
<name>CRR10_ARATH</name>
<reference key="1">
    <citation type="journal article" date="1999" name="Nature">
        <title>Sequence and analysis of chromosome 2 of the plant Arabidopsis thaliana.</title>
        <authorList>
            <person name="Lin X."/>
            <person name="Kaul S."/>
            <person name="Rounsley S.D."/>
            <person name="Shea T.P."/>
            <person name="Benito M.-I."/>
            <person name="Town C.D."/>
            <person name="Fujii C.Y."/>
            <person name="Mason T.M."/>
            <person name="Bowman C.L."/>
            <person name="Barnstead M.E."/>
            <person name="Feldblyum T.V."/>
            <person name="Buell C.R."/>
            <person name="Ketchum K.A."/>
            <person name="Lee J.J."/>
            <person name="Ronning C.M."/>
            <person name="Koo H.L."/>
            <person name="Moffat K.S."/>
            <person name="Cronin L.A."/>
            <person name="Shen M."/>
            <person name="Pai G."/>
            <person name="Van Aken S."/>
            <person name="Umayam L."/>
            <person name="Tallon L.J."/>
            <person name="Gill J.E."/>
            <person name="Adams M.D."/>
            <person name="Carrera A.J."/>
            <person name="Creasy T.H."/>
            <person name="Goodman H.M."/>
            <person name="Somerville C.R."/>
            <person name="Copenhaver G.P."/>
            <person name="Preuss D."/>
            <person name="Nierman W.C."/>
            <person name="White O."/>
            <person name="Eisen J.A."/>
            <person name="Salzberg S.L."/>
            <person name="Fraser C.M."/>
            <person name="Venter J.C."/>
        </authorList>
    </citation>
    <scope>NUCLEOTIDE SEQUENCE [LARGE SCALE GENOMIC DNA]</scope>
    <source>
        <strain>cv. Columbia</strain>
    </source>
</reference>
<reference key="2">
    <citation type="journal article" date="2017" name="Plant J.">
        <title>Araport11: a complete reannotation of the Arabidopsis thaliana reference genome.</title>
        <authorList>
            <person name="Cheng C.Y."/>
            <person name="Krishnakumar V."/>
            <person name="Chan A.P."/>
            <person name="Thibaud-Nissen F."/>
            <person name="Schobel S."/>
            <person name="Town C.D."/>
        </authorList>
    </citation>
    <scope>GENOME REANNOTATION</scope>
    <source>
        <strain>cv. Columbia</strain>
    </source>
</reference>
<reference key="3">
    <citation type="journal article" date="2001" name="Plant Physiol.">
        <title>A superfamily of proteins with novel cysteine-rich repeats.</title>
        <authorList>
            <person name="Chen Z."/>
        </authorList>
    </citation>
    <scope>GENE FAMILY ORGANIZATION</scope>
    <scope>NOMENCLATURE</scope>
</reference>
<protein>
    <recommendedName>
        <fullName>Putative cysteine-rich repeat secretory protein 10</fullName>
    </recommendedName>
</protein>
<accession>Q9SIP6</accession>
<dbReference type="EMBL" id="AC007071">
    <property type="protein sequence ID" value="AAD24839.1"/>
    <property type="molecule type" value="Genomic_DNA"/>
</dbReference>
<dbReference type="EMBL" id="CP002685">
    <property type="protein sequence ID" value="AEC08568.1"/>
    <property type="molecule type" value="Genomic_DNA"/>
</dbReference>
<dbReference type="PIR" id="A84723">
    <property type="entry name" value="A84723"/>
</dbReference>
<dbReference type="RefSeq" id="NP_180720.1">
    <property type="nucleotide sequence ID" value="NM_128719.1"/>
</dbReference>
<dbReference type="SMR" id="Q9SIP6"/>
<dbReference type="PaxDb" id="3702-AT2G31620.1"/>
<dbReference type="ProteomicsDB" id="220314"/>
<dbReference type="EnsemblPlants" id="AT2G31620.1">
    <property type="protein sequence ID" value="AT2G31620.1"/>
    <property type="gene ID" value="AT2G31620"/>
</dbReference>
<dbReference type="GeneID" id="817720"/>
<dbReference type="Gramene" id="AT2G31620.1">
    <property type="protein sequence ID" value="AT2G31620.1"/>
    <property type="gene ID" value="AT2G31620"/>
</dbReference>
<dbReference type="KEGG" id="ath:AT2G31620"/>
<dbReference type="Araport" id="AT2G31620"/>
<dbReference type="TAIR" id="AT2G31620"/>
<dbReference type="eggNOG" id="ENOG502QPWH">
    <property type="taxonomic scope" value="Eukaryota"/>
</dbReference>
<dbReference type="HOGENOM" id="CLU_000288_35_0_1"/>
<dbReference type="InParanoid" id="Q9SIP6"/>
<dbReference type="OMA" id="YLQHICI"/>
<dbReference type="OrthoDB" id="1909574at2759"/>
<dbReference type="PhylomeDB" id="Q9SIP6"/>
<dbReference type="PRO" id="PR:Q9SIP6"/>
<dbReference type="Proteomes" id="UP000006548">
    <property type="component" value="Chromosome 2"/>
</dbReference>
<dbReference type="ExpressionAtlas" id="Q9SIP6">
    <property type="expression patterns" value="baseline and differential"/>
</dbReference>
<dbReference type="GO" id="GO:0005576">
    <property type="term" value="C:extracellular region"/>
    <property type="evidence" value="ECO:0007669"/>
    <property type="project" value="UniProtKB-SubCell"/>
</dbReference>
<dbReference type="CDD" id="cd23509">
    <property type="entry name" value="Gnk2-like"/>
    <property type="match status" value="2"/>
</dbReference>
<dbReference type="FunFam" id="3.30.430.20:FF:000007">
    <property type="entry name" value="Cysteine-rich receptor-like protein kinase 11"/>
    <property type="match status" value="1"/>
</dbReference>
<dbReference type="Gene3D" id="3.30.430.20">
    <property type="entry name" value="Gnk2 domain, C-X8-C-X2-C motif"/>
    <property type="match status" value="2"/>
</dbReference>
<dbReference type="InterPro" id="IPR050581">
    <property type="entry name" value="CRR_secretory_protein"/>
</dbReference>
<dbReference type="InterPro" id="IPR002902">
    <property type="entry name" value="GNK2"/>
</dbReference>
<dbReference type="InterPro" id="IPR038408">
    <property type="entry name" value="GNK2_sf"/>
</dbReference>
<dbReference type="PANTHER" id="PTHR32411:SF54">
    <property type="entry name" value="CYSTEINE-RICH REPEAT SECRETORY PROTEIN 29-RELATED"/>
    <property type="match status" value="1"/>
</dbReference>
<dbReference type="PANTHER" id="PTHR32411">
    <property type="entry name" value="CYSTEINE-RICH REPEAT SECRETORY PROTEIN 38-RELATED"/>
    <property type="match status" value="1"/>
</dbReference>
<dbReference type="Pfam" id="PF01657">
    <property type="entry name" value="Stress-antifung"/>
    <property type="match status" value="2"/>
</dbReference>
<dbReference type="PROSITE" id="PS51473">
    <property type="entry name" value="GNK2"/>
    <property type="match status" value="2"/>
</dbReference>